<dbReference type="EMBL" id="CH473993">
    <property type="protein sequence ID" value="EDL78354.1"/>
    <property type="molecule type" value="Genomic_DNA"/>
</dbReference>
<dbReference type="EMBL" id="CH473993">
    <property type="protein sequence ID" value="EDL78355.1"/>
    <property type="molecule type" value="Genomic_DNA"/>
</dbReference>
<dbReference type="EMBL" id="BC092647">
    <property type="protein sequence ID" value="AAH92647.1"/>
    <property type="molecule type" value="mRNA"/>
</dbReference>
<dbReference type="RefSeq" id="NP_001015017.1">
    <molecule id="Q568Y7-1"/>
    <property type="nucleotide sequence ID" value="NM_001015017.1"/>
</dbReference>
<dbReference type="SMR" id="Q568Y7"/>
<dbReference type="CORUM" id="Q568Y7"/>
<dbReference type="FunCoup" id="Q568Y7">
    <property type="interactions" value="752"/>
</dbReference>
<dbReference type="STRING" id="10116.ENSRNOP00000027829"/>
<dbReference type="GlyCosmos" id="Q568Y7">
    <property type="glycosylation" value="7 sites, No reported glycans"/>
</dbReference>
<dbReference type="GlyGen" id="Q568Y7">
    <property type="glycosylation" value="7 sites"/>
</dbReference>
<dbReference type="PhosphoSitePlus" id="Q568Y7"/>
<dbReference type="PaxDb" id="10116-ENSRNOP00000027829"/>
<dbReference type="Ensembl" id="ENSRNOT00000027829.8">
    <molecule id="Q568Y7-1"/>
    <property type="protein sequence ID" value="ENSRNOP00000027829.5"/>
    <property type="gene ID" value="ENSRNOG00000020519.8"/>
</dbReference>
<dbReference type="GeneID" id="313783"/>
<dbReference type="KEGG" id="rno:313783"/>
<dbReference type="UCSC" id="RGD:1309741">
    <molecule id="Q568Y7-1"/>
    <property type="organism name" value="rat"/>
</dbReference>
<dbReference type="AGR" id="RGD:1309741"/>
<dbReference type="CTD" id="93145"/>
<dbReference type="RGD" id="1309741">
    <property type="gene designation" value="Olfm2"/>
</dbReference>
<dbReference type="eggNOG" id="KOG3545">
    <property type="taxonomic scope" value="Eukaryota"/>
</dbReference>
<dbReference type="GeneTree" id="ENSGT00940000159148"/>
<dbReference type="HOGENOM" id="CLU_035236_0_0_1"/>
<dbReference type="InParanoid" id="Q568Y7"/>
<dbReference type="OMA" id="HQVVYNV"/>
<dbReference type="OrthoDB" id="8626508at2759"/>
<dbReference type="PhylomeDB" id="Q568Y7"/>
<dbReference type="TreeFam" id="TF315964"/>
<dbReference type="PRO" id="PR:Q568Y7"/>
<dbReference type="Proteomes" id="UP000002494">
    <property type="component" value="Chromosome 8"/>
</dbReference>
<dbReference type="Proteomes" id="UP000234681">
    <property type="component" value="Chromosome 8"/>
</dbReference>
<dbReference type="Bgee" id="ENSRNOG00000020519">
    <property type="expression patterns" value="Expressed in frontal cortex and 12 other cell types or tissues"/>
</dbReference>
<dbReference type="GO" id="GO:0032281">
    <property type="term" value="C:AMPA glutamate receptor complex"/>
    <property type="evidence" value="ECO:0000266"/>
    <property type="project" value="RGD"/>
</dbReference>
<dbReference type="GO" id="GO:0005737">
    <property type="term" value="C:cytoplasm"/>
    <property type="evidence" value="ECO:0000250"/>
    <property type="project" value="UniProtKB"/>
</dbReference>
<dbReference type="GO" id="GO:0005576">
    <property type="term" value="C:extracellular region"/>
    <property type="evidence" value="ECO:0000266"/>
    <property type="project" value="RGD"/>
</dbReference>
<dbReference type="GO" id="GO:0005615">
    <property type="term" value="C:extracellular space"/>
    <property type="evidence" value="ECO:0000318"/>
    <property type="project" value="GO_Central"/>
</dbReference>
<dbReference type="GO" id="GO:0099147">
    <property type="term" value="C:extrinsic component of postsynaptic density membrane"/>
    <property type="evidence" value="ECO:0000266"/>
    <property type="project" value="RGD"/>
</dbReference>
<dbReference type="GO" id="GO:0098978">
    <property type="term" value="C:glutamatergic synapse"/>
    <property type="evidence" value="ECO:0000266"/>
    <property type="project" value="RGD"/>
</dbReference>
<dbReference type="GO" id="GO:0005654">
    <property type="term" value="C:nucleoplasm"/>
    <property type="evidence" value="ECO:0007669"/>
    <property type="project" value="Ensembl"/>
</dbReference>
<dbReference type="GO" id="GO:0005634">
    <property type="term" value="C:nucleus"/>
    <property type="evidence" value="ECO:0000250"/>
    <property type="project" value="UniProtKB"/>
</dbReference>
<dbReference type="GO" id="GO:0097060">
    <property type="term" value="C:synaptic membrane"/>
    <property type="evidence" value="ECO:0000266"/>
    <property type="project" value="RGD"/>
</dbReference>
<dbReference type="GO" id="GO:0007626">
    <property type="term" value="P:locomotory behavior"/>
    <property type="evidence" value="ECO:0000266"/>
    <property type="project" value="RGD"/>
</dbReference>
<dbReference type="GO" id="GO:0099645">
    <property type="term" value="P:neurotransmitter receptor localization to postsynaptic specialization membrane"/>
    <property type="evidence" value="ECO:0000266"/>
    <property type="project" value="RGD"/>
</dbReference>
<dbReference type="GO" id="GO:0051152">
    <property type="term" value="P:positive regulation of smooth muscle cell differentiation"/>
    <property type="evidence" value="ECO:0000250"/>
    <property type="project" value="UniProtKB"/>
</dbReference>
<dbReference type="GO" id="GO:0009306">
    <property type="term" value="P:protein secretion"/>
    <property type="evidence" value="ECO:0000266"/>
    <property type="project" value="RGD"/>
</dbReference>
<dbReference type="GO" id="GO:1905174">
    <property type="term" value="P:regulation of vascular associated smooth muscle cell dedifferentiation"/>
    <property type="evidence" value="ECO:0000315"/>
    <property type="project" value="UniProtKB"/>
</dbReference>
<dbReference type="GO" id="GO:0007165">
    <property type="term" value="P:signal transduction"/>
    <property type="evidence" value="ECO:0000318"/>
    <property type="project" value="GO_Central"/>
</dbReference>
<dbReference type="GO" id="GO:0007601">
    <property type="term" value="P:visual perception"/>
    <property type="evidence" value="ECO:0000266"/>
    <property type="project" value="RGD"/>
</dbReference>
<dbReference type="InterPro" id="IPR022082">
    <property type="entry name" value="Noelin_dom"/>
</dbReference>
<dbReference type="InterPro" id="IPR003112">
    <property type="entry name" value="Olfac-like_dom"/>
</dbReference>
<dbReference type="InterPro" id="IPR050605">
    <property type="entry name" value="Olfactomedin-like_domain"/>
</dbReference>
<dbReference type="PANTHER" id="PTHR23192:SF27">
    <property type="entry name" value="NOELIN-2"/>
    <property type="match status" value="1"/>
</dbReference>
<dbReference type="PANTHER" id="PTHR23192">
    <property type="entry name" value="OLFACTOMEDIN-RELATED"/>
    <property type="match status" value="1"/>
</dbReference>
<dbReference type="Pfam" id="PF12308">
    <property type="entry name" value="Noelin-1"/>
    <property type="match status" value="1"/>
</dbReference>
<dbReference type="Pfam" id="PF02191">
    <property type="entry name" value="OLF"/>
    <property type="match status" value="1"/>
</dbReference>
<dbReference type="SMART" id="SM00284">
    <property type="entry name" value="OLF"/>
    <property type="match status" value="1"/>
</dbReference>
<dbReference type="PROSITE" id="PS51132">
    <property type="entry name" value="OLF"/>
    <property type="match status" value="1"/>
</dbReference>
<comment type="function">
    <text evidence="1 2 6">Involved in transforming growth factor beta (TGF-beta)-induced smooth muscle differentiation. TGF-beta induces expression and nuclear translocation of OLFM2 where it binds to SRF, causing its dissociation from the transcriptional repressor HEY2/HERP1 and facilitating binding of SRF to target genes. Plays a role in AMPAR complex organization. Is a regulator of vascular smooth-muscle cell (SMC) phenotypic switching, that acts by promoting RUNX2 and inhibiting MYOCD binding to SRF. SMC phenotypic switching is the process through which vascular SMCs undergo transition between a quiescent contractile phenotype and a proliferative synthetic phenotype in response to pathological stimuli. SMC phenotypic plasticity is essential for vascular development and remodeling (PubMed:28062493).</text>
</comment>
<comment type="subunit">
    <text evidence="1 2 5 6">Peripherally associated with AMPAR complex. AMPAR complex consists of an inner core made of 4 pore-forming GluA/GRIA proteins (GRIA1, GRIA2, GRIA3 and GRIA4) and 4 major auxiliary subunits arranged in a twofold symmetry. One of the two pairs of distinct binding sites is occupied either by CNIH2, CNIH3 or CACNG2, CACNG3. The other harbors CACNG2, CACNG3, CACNG4, CACNG8 or GSG1L. This inner core of AMPAR complex is complemented by outer core constituents binding directly to the GluA/GRIA proteins at sites distinct from the interaction sites of the inner core constituents. Outer core constituents include at least PRRT1, PRRT2, CKAMP44/SHISA9, FRRS1L and NRN1. The proteins of the inner and outer core serve as a platform for other, more peripherally associated AMPAR constituents, including OLFM2. Alone or in combination, these auxiliary subunits control the gating and pharmacology of the AMPAR complex and profoundly impact their biogenesis and protein processing (PubMed:22632720). Interacts with GRIA2 (By similarity). Interacts with OLFM1 and OLFM3 (By similarity). Interacts with SRF; the interaction promotes dissociation of SRF from the transcriptional repressor HEY2 (By similarity). Interacts with RUNX2 (PubMed:28062493).</text>
</comment>
<comment type="subcellular location">
    <subcellularLocation>
        <location evidence="1">Secreted</location>
    </subcellularLocation>
    <subcellularLocation>
        <location evidence="8">Synapse</location>
    </subcellularLocation>
    <subcellularLocation>
        <location evidence="2">Membrane</location>
    </subcellularLocation>
    <subcellularLocation>
        <location evidence="1">Nucleus</location>
    </subcellularLocation>
    <subcellularLocation>
        <location evidence="1">Cytoplasm</location>
    </subcellularLocation>
    <text evidence="1">Nuclear localization is induced by TGF-beta.</text>
</comment>
<comment type="alternative products">
    <event type="alternative splicing"/>
    <isoform>
        <id>Q568Y7-1</id>
        <name>1</name>
        <sequence type="displayed"/>
    </isoform>
    <isoform>
        <id>Q568Y7-2</id>
        <name>2</name>
        <sequence type="described" ref="VSP_044590"/>
    </isoform>
</comment>
<comment type="tissue specificity">
    <text evidence="5 6">Expressed in the brain (at protein level) (PubMed:22632720). Expressed in carotid arteries and the aorta, mainly in aortic SMCs (PubMed:28062493).</text>
</comment>
<comment type="induction">
    <text evidence="6">Expression in SMCs and carotid arteries is up-regulated upon injury or by PDGFB.</text>
</comment>
<proteinExistence type="evidence at protein level"/>
<reference key="1">
    <citation type="submission" date="2005-09" db="EMBL/GenBank/DDBJ databases">
        <authorList>
            <person name="Mural R.J."/>
            <person name="Adams M.D."/>
            <person name="Myers E.W."/>
            <person name="Smith H.O."/>
            <person name="Venter J.C."/>
        </authorList>
    </citation>
    <scope>NUCLEOTIDE SEQUENCE [LARGE SCALE GENOMIC DNA]</scope>
</reference>
<reference key="2">
    <citation type="journal article" date="2004" name="Genome Res.">
        <title>The status, quality, and expansion of the NIH full-length cDNA project: the Mammalian Gene Collection (MGC).</title>
        <authorList>
            <consortium name="The MGC Project Team"/>
        </authorList>
    </citation>
    <scope>NUCLEOTIDE SEQUENCE [LARGE SCALE MRNA] (ISOFORM 1)</scope>
    <source>
        <tissue>Brain</tissue>
    </source>
</reference>
<reference key="3">
    <citation type="journal article" date="2012" name="Neuron">
        <title>High-resolution proteomics unravel architecture and molecular diversity of native AMPA receptor complexes.</title>
        <authorList>
            <person name="Schwenk J."/>
            <person name="Harmel N."/>
            <person name="Brechet A."/>
            <person name="Zolles G."/>
            <person name="Berkefeld H."/>
            <person name="Muller C.S."/>
            <person name="Bildl W."/>
            <person name="Baehrens D."/>
            <person name="Huber B."/>
            <person name="Kulik A."/>
            <person name="Klocker N."/>
            <person name="Schulte U."/>
            <person name="Fakler B."/>
        </authorList>
    </citation>
    <scope>IDENTIFICATION IN AMPAR COMPLEX</scope>
    <scope>SUBCELLULAR LOCATION</scope>
    <scope>TISSUE SPECIFICITY</scope>
</reference>
<reference key="4">
    <citation type="journal article" date="2017" name="Arterioscler. Thromb. Vasc. Biol.">
        <title>Olfactomedin 2 regulates smooth muscle phenotypic modulation and vascular remodeling through mediating Runt-related transcription factor 2 binding to serum response factor.</title>
        <authorList>
            <person name="Shi N."/>
            <person name="Li C.X."/>
            <person name="Cui X.B."/>
            <person name="Tomarev S.I."/>
            <person name="Chen S.Y."/>
        </authorList>
    </citation>
    <scope>FUNCTION</scope>
    <scope>TISSUE SPECIFICITY</scope>
    <scope>INTERACTION WITH RUNX2</scope>
</reference>
<accession>Q568Y7</accession>
<accession>A6JNL2</accession>
<gene>
    <name type="primary">Olfm2</name>
</gene>
<organism>
    <name type="scientific">Rattus norvegicus</name>
    <name type="common">Rat</name>
    <dbReference type="NCBI Taxonomy" id="10116"/>
    <lineage>
        <taxon>Eukaryota</taxon>
        <taxon>Metazoa</taxon>
        <taxon>Chordata</taxon>
        <taxon>Craniata</taxon>
        <taxon>Vertebrata</taxon>
        <taxon>Euteleostomi</taxon>
        <taxon>Mammalia</taxon>
        <taxon>Eutheria</taxon>
        <taxon>Euarchontoglires</taxon>
        <taxon>Glires</taxon>
        <taxon>Rodentia</taxon>
        <taxon>Myomorpha</taxon>
        <taxon>Muroidea</taxon>
        <taxon>Muridae</taxon>
        <taxon>Murinae</taxon>
        <taxon>Rattus</taxon>
    </lineage>
</organism>
<keyword id="KW-0025">Alternative splicing</keyword>
<keyword id="KW-0175">Coiled coil</keyword>
<keyword id="KW-0963">Cytoplasm</keyword>
<keyword id="KW-1015">Disulfide bond</keyword>
<keyword id="KW-0325">Glycoprotein</keyword>
<keyword id="KW-0472">Membrane</keyword>
<keyword id="KW-0539">Nucleus</keyword>
<keyword id="KW-1185">Reference proteome</keyword>
<keyword id="KW-0964">Secreted</keyword>
<keyword id="KW-0732">Signal</keyword>
<keyword id="KW-0770">Synapse</keyword>
<sequence length="478" mass="53870">MSVPLLKIGAVLSTMAMVTNWMSQTLPSLVGLNSTVSRAGSSEKITLFQSPEEGWQLYTSAQAPDGKCICTAVIPAQSTCARDGRSRELRQLMEKVQNVSQSMEVLELRTYRDLQYVRSMETLMRSLDARLRTADGSVSAKSFQELKDRMTELLPLSSVLEQYKADTRTIVRLREEVRNLSGNLAAIQEEMGAYGYEDLQQRVMALEARLHACAQKLGCGKLTGVSNPITIRAMGSRFGSWMTDTMAPSADSRVWYMDGYYKGRRVLEFRTLGDFIKGQNFIQHLLPQPWAGTGHVVYNGSLFYNKYQSNVVVKYHFRSRSVLVQRSLPGAGYNNTFPYSWGGFSDMDFMVDESGLWAVYTTNQNAGNIVVSRLDPHTLEVVRSWDTGYPKRSAGEAFMICGVLYVTNSHLAGAKVYFAYFTNTSSYEYTDVPFHNQYSHISMLDYNPRERALYTWNNGHQVLYNVTLFHVISTAGDP</sequence>
<evidence type="ECO:0000250" key="1">
    <source>
        <dbReference type="UniProtKB" id="O95897"/>
    </source>
</evidence>
<evidence type="ECO:0000250" key="2">
    <source>
        <dbReference type="UniProtKB" id="Q8BM13"/>
    </source>
</evidence>
<evidence type="ECO:0000255" key="3"/>
<evidence type="ECO:0000255" key="4">
    <source>
        <dbReference type="PROSITE-ProRule" id="PRU00446"/>
    </source>
</evidence>
<evidence type="ECO:0000269" key="5">
    <source>
    </source>
</evidence>
<evidence type="ECO:0000269" key="6">
    <source>
    </source>
</evidence>
<evidence type="ECO:0000305" key="7"/>
<evidence type="ECO:0000305" key="8">
    <source>
    </source>
</evidence>
<protein>
    <recommendedName>
        <fullName>Noelin-2</fullName>
    </recommendedName>
    <alternativeName>
        <fullName>Olfactomedin-2</fullName>
    </alternativeName>
</protein>
<name>NOE2_RAT</name>
<feature type="signal peptide" evidence="3">
    <location>
        <begin position="1"/>
        <end position="16"/>
    </location>
</feature>
<feature type="chain" id="PRO_0000420686" description="Noelin-2">
    <location>
        <begin position="17"/>
        <end position="478"/>
    </location>
</feature>
<feature type="domain" description="Olfactomedin-like" evidence="4">
    <location>
        <begin position="218"/>
        <end position="470"/>
    </location>
</feature>
<feature type="coiled-coil region" evidence="3">
    <location>
        <begin position="86"/>
        <end position="109"/>
    </location>
</feature>
<feature type="coiled-coil region" evidence="3">
    <location>
        <begin position="160"/>
        <end position="218"/>
    </location>
</feature>
<feature type="glycosylation site" description="N-linked (GlcNAc...) asparagine" evidence="3">
    <location>
        <position position="33"/>
    </location>
</feature>
<feature type="glycosylation site" description="N-linked (GlcNAc...) asparagine" evidence="3">
    <location>
        <position position="98"/>
    </location>
</feature>
<feature type="glycosylation site" description="N-linked (GlcNAc...) asparagine" evidence="3">
    <location>
        <position position="179"/>
    </location>
</feature>
<feature type="glycosylation site" description="N-linked (GlcNAc...) asparagine" evidence="3">
    <location>
        <position position="299"/>
    </location>
</feature>
<feature type="glycosylation site" description="N-linked (GlcNAc...) asparagine" evidence="3">
    <location>
        <position position="334"/>
    </location>
</feature>
<feature type="glycosylation site" description="N-linked (GlcNAc...) asparagine" evidence="3">
    <location>
        <position position="423"/>
    </location>
</feature>
<feature type="glycosylation site" description="N-linked (GlcNAc...) asparagine" evidence="3">
    <location>
        <position position="465"/>
    </location>
</feature>
<feature type="disulfide bond" evidence="4">
    <location>
        <begin position="219"/>
        <end position="401"/>
    </location>
</feature>
<feature type="splice variant" id="VSP_044590" description="In isoform 2." evidence="7">
    <original>MSVPLLKIGAVLSTMAMVTNWMSQTLPSLVGLNSTVSRAGSSEKI</original>
    <variation>MRKLRQTGIAIAGDH</variation>
    <location>
        <begin position="1"/>
        <end position="45"/>
    </location>
</feature>